<evidence type="ECO:0000250" key="1">
    <source>
        <dbReference type="UniProtKB" id="Q9Y242"/>
    </source>
</evidence>
<evidence type="ECO:0000255" key="2">
    <source>
        <dbReference type="PROSITE-ProRule" id="PRU00086"/>
    </source>
</evidence>
<evidence type="ECO:0000256" key="3">
    <source>
        <dbReference type="SAM" id="MobiDB-lite"/>
    </source>
</evidence>
<evidence type="ECO:0000305" key="4"/>
<protein>
    <recommendedName>
        <fullName>Transcription factor 19-like protein</fullName>
        <shortName>TCF-19</shortName>
    </recommendedName>
    <alternativeName>
        <fullName>SC1 protein homolog</fullName>
    </alternativeName>
</protein>
<organism>
    <name type="scientific">Mus musculus</name>
    <name type="common">Mouse</name>
    <dbReference type="NCBI Taxonomy" id="10090"/>
    <lineage>
        <taxon>Eukaryota</taxon>
        <taxon>Metazoa</taxon>
        <taxon>Chordata</taxon>
        <taxon>Craniata</taxon>
        <taxon>Vertebrata</taxon>
        <taxon>Euteleostomi</taxon>
        <taxon>Mammalia</taxon>
        <taxon>Eutheria</taxon>
        <taxon>Euarchontoglires</taxon>
        <taxon>Glires</taxon>
        <taxon>Rodentia</taxon>
        <taxon>Myomorpha</taxon>
        <taxon>Muroidea</taxon>
        <taxon>Muridae</taxon>
        <taxon>Murinae</taxon>
        <taxon>Mus</taxon>
        <taxon>Mus</taxon>
    </lineage>
</organism>
<dbReference type="EMBL" id="AK077414">
    <property type="protein sequence ID" value="BAC36789.1"/>
    <property type="molecule type" value="mRNA"/>
</dbReference>
<dbReference type="EMBL" id="AK088479">
    <property type="protein sequence ID" value="BAC40380.1"/>
    <property type="molecule type" value="mRNA"/>
</dbReference>
<dbReference type="EMBL" id="AK004231">
    <property type="protein sequence ID" value="BAB23229.1"/>
    <property type="molecule type" value="mRNA"/>
</dbReference>
<dbReference type="EMBL" id="BC004617">
    <property type="protein sequence ID" value="AAH04617.1"/>
    <property type="molecule type" value="mRNA"/>
</dbReference>
<dbReference type="CCDS" id="CCDS50089.1"/>
<dbReference type="PIR" id="B61188">
    <property type="entry name" value="B61188"/>
</dbReference>
<dbReference type="RefSeq" id="NP_001157235.1">
    <property type="nucleotide sequence ID" value="NM_001163763.1"/>
</dbReference>
<dbReference type="RefSeq" id="NP_001157236.1">
    <property type="nucleotide sequence ID" value="NM_001163764.1"/>
</dbReference>
<dbReference type="RefSeq" id="NP_079950.2">
    <property type="nucleotide sequence ID" value="NM_025674.2"/>
</dbReference>
<dbReference type="SMR" id="Q99KJ5"/>
<dbReference type="BioGRID" id="223128">
    <property type="interactions" value="3"/>
</dbReference>
<dbReference type="FunCoup" id="Q99KJ5">
    <property type="interactions" value="846"/>
</dbReference>
<dbReference type="STRING" id="10090.ENSMUSP00000125167"/>
<dbReference type="PhosphoSitePlus" id="Q99KJ5"/>
<dbReference type="PaxDb" id="10090-ENSMUSP00000125167"/>
<dbReference type="ProteomicsDB" id="254679"/>
<dbReference type="DNASU" id="106795"/>
<dbReference type="GeneID" id="106795"/>
<dbReference type="KEGG" id="mmu:106795"/>
<dbReference type="AGR" id="MGI:103180"/>
<dbReference type="CTD" id="6941"/>
<dbReference type="MGI" id="MGI:103180">
    <property type="gene designation" value="Tcf19"/>
</dbReference>
<dbReference type="eggNOG" id="ENOG502RHCY">
    <property type="taxonomic scope" value="Eukaryota"/>
</dbReference>
<dbReference type="InParanoid" id="Q99KJ5"/>
<dbReference type="OrthoDB" id="436852at2759"/>
<dbReference type="BioGRID-ORCS" id="106795">
    <property type="hits" value="2 hits in 81 CRISPR screens"/>
</dbReference>
<dbReference type="ChiTaRS" id="Tcf19">
    <property type="organism name" value="mouse"/>
</dbReference>
<dbReference type="PRO" id="PR:Q99KJ5"/>
<dbReference type="Proteomes" id="UP000000589">
    <property type="component" value="Unplaced"/>
</dbReference>
<dbReference type="RNAct" id="Q99KJ5">
    <property type="molecule type" value="protein"/>
</dbReference>
<dbReference type="GO" id="GO:0005634">
    <property type="term" value="C:nucleus"/>
    <property type="evidence" value="ECO:0000314"/>
    <property type="project" value="MGI"/>
</dbReference>
<dbReference type="GO" id="GO:0000082">
    <property type="term" value="P:G1/S transition of mitotic cell cycle"/>
    <property type="evidence" value="ECO:0000315"/>
    <property type="project" value="MGI"/>
</dbReference>
<dbReference type="GO" id="GO:0010468">
    <property type="term" value="P:regulation of gene expression"/>
    <property type="evidence" value="ECO:0000314"/>
    <property type="project" value="MGI"/>
</dbReference>
<dbReference type="GO" id="GO:0044342">
    <property type="term" value="P:type B pancreatic cell proliferation"/>
    <property type="evidence" value="ECO:0000315"/>
    <property type="project" value="MGI"/>
</dbReference>
<dbReference type="CDD" id="cd22685">
    <property type="entry name" value="FHA_TCF19"/>
    <property type="match status" value="1"/>
</dbReference>
<dbReference type="Gene3D" id="2.60.200.20">
    <property type="match status" value="1"/>
</dbReference>
<dbReference type="InterPro" id="IPR000253">
    <property type="entry name" value="FHA_dom"/>
</dbReference>
<dbReference type="InterPro" id="IPR008984">
    <property type="entry name" value="SMAD_FHA_dom_sf"/>
</dbReference>
<dbReference type="InterPro" id="IPR042803">
    <property type="entry name" value="TCF19"/>
</dbReference>
<dbReference type="PANTHER" id="PTHR15464">
    <property type="entry name" value="TRANSCRIPTION FACTOR 19"/>
    <property type="match status" value="1"/>
</dbReference>
<dbReference type="PANTHER" id="PTHR15464:SF1">
    <property type="entry name" value="TRANSCRIPTION FACTOR 19"/>
    <property type="match status" value="1"/>
</dbReference>
<dbReference type="Pfam" id="PF00498">
    <property type="entry name" value="FHA"/>
    <property type="match status" value="1"/>
</dbReference>
<dbReference type="SMART" id="SM00240">
    <property type="entry name" value="FHA"/>
    <property type="match status" value="1"/>
</dbReference>
<dbReference type="SUPFAM" id="SSF49879">
    <property type="entry name" value="SMAD/FHA domain"/>
    <property type="match status" value="1"/>
</dbReference>
<dbReference type="PROSITE" id="PS50006">
    <property type="entry name" value="FHA_DOMAIN"/>
    <property type="match status" value="1"/>
</dbReference>
<accession>Q99KJ5</accession>
<accession>Q8BPA3</accession>
<accession>Q9CT93</accession>
<name>TCF19_MOUSE</name>
<comment type="function">
    <text evidence="1">Potential transcription factor that may play a role in the regulation of genes involved in cell cycle G1/S transition (By similarity). May bind to regulatory elements of genes, including the promoter of the transcription factor FOXO1 (By similarity).</text>
</comment>
<comment type="subcellular location">
    <subcellularLocation>
        <location evidence="1">Nucleus</location>
    </subcellularLocation>
</comment>
<comment type="miscellaneous">
    <text>This sequence is very similar to other orthologs but it lacks the PHD-type zinc finger domain which may be important for the trans-activation function.</text>
</comment>
<reference key="1">
    <citation type="journal article" date="2005" name="Science">
        <title>The transcriptional landscape of the mammalian genome.</title>
        <authorList>
            <person name="Carninci P."/>
            <person name="Kasukawa T."/>
            <person name="Katayama S."/>
            <person name="Gough J."/>
            <person name="Frith M.C."/>
            <person name="Maeda N."/>
            <person name="Oyama R."/>
            <person name="Ravasi T."/>
            <person name="Lenhard B."/>
            <person name="Wells C."/>
            <person name="Kodzius R."/>
            <person name="Shimokawa K."/>
            <person name="Bajic V.B."/>
            <person name="Brenner S.E."/>
            <person name="Batalov S."/>
            <person name="Forrest A.R."/>
            <person name="Zavolan M."/>
            <person name="Davis M.J."/>
            <person name="Wilming L.G."/>
            <person name="Aidinis V."/>
            <person name="Allen J.E."/>
            <person name="Ambesi-Impiombato A."/>
            <person name="Apweiler R."/>
            <person name="Aturaliya R.N."/>
            <person name="Bailey T.L."/>
            <person name="Bansal M."/>
            <person name="Baxter L."/>
            <person name="Beisel K.W."/>
            <person name="Bersano T."/>
            <person name="Bono H."/>
            <person name="Chalk A.M."/>
            <person name="Chiu K.P."/>
            <person name="Choudhary V."/>
            <person name="Christoffels A."/>
            <person name="Clutterbuck D.R."/>
            <person name="Crowe M.L."/>
            <person name="Dalla E."/>
            <person name="Dalrymple B.P."/>
            <person name="de Bono B."/>
            <person name="Della Gatta G."/>
            <person name="di Bernardo D."/>
            <person name="Down T."/>
            <person name="Engstrom P."/>
            <person name="Fagiolini M."/>
            <person name="Faulkner G."/>
            <person name="Fletcher C.F."/>
            <person name="Fukushima T."/>
            <person name="Furuno M."/>
            <person name="Futaki S."/>
            <person name="Gariboldi M."/>
            <person name="Georgii-Hemming P."/>
            <person name="Gingeras T.R."/>
            <person name="Gojobori T."/>
            <person name="Green R.E."/>
            <person name="Gustincich S."/>
            <person name="Harbers M."/>
            <person name="Hayashi Y."/>
            <person name="Hensch T.K."/>
            <person name="Hirokawa N."/>
            <person name="Hill D."/>
            <person name="Huminiecki L."/>
            <person name="Iacono M."/>
            <person name="Ikeo K."/>
            <person name="Iwama A."/>
            <person name="Ishikawa T."/>
            <person name="Jakt M."/>
            <person name="Kanapin A."/>
            <person name="Katoh M."/>
            <person name="Kawasawa Y."/>
            <person name="Kelso J."/>
            <person name="Kitamura H."/>
            <person name="Kitano H."/>
            <person name="Kollias G."/>
            <person name="Krishnan S.P."/>
            <person name="Kruger A."/>
            <person name="Kummerfeld S.K."/>
            <person name="Kurochkin I.V."/>
            <person name="Lareau L.F."/>
            <person name="Lazarevic D."/>
            <person name="Lipovich L."/>
            <person name="Liu J."/>
            <person name="Liuni S."/>
            <person name="McWilliam S."/>
            <person name="Madan Babu M."/>
            <person name="Madera M."/>
            <person name="Marchionni L."/>
            <person name="Matsuda H."/>
            <person name="Matsuzawa S."/>
            <person name="Miki H."/>
            <person name="Mignone F."/>
            <person name="Miyake S."/>
            <person name="Morris K."/>
            <person name="Mottagui-Tabar S."/>
            <person name="Mulder N."/>
            <person name="Nakano N."/>
            <person name="Nakauchi H."/>
            <person name="Ng P."/>
            <person name="Nilsson R."/>
            <person name="Nishiguchi S."/>
            <person name="Nishikawa S."/>
            <person name="Nori F."/>
            <person name="Ohara O."/>
            <person name="Okazaki Y."/>
            <person name="Orlando V."/>
            <person name="Pang K.C."/>
            <person name="Pavan W.J."/>
            <person name="Pavesi G."/>
            <person name="Pesole G."/>
            <person name="Petrovsky N."/>
            <person name="Piazza S."/>
            <person name="Reed J."/>
            <person name="Reid J.F."/>
            <person name="Ring B.Z."/>
            <person name="Ringwald M."/>
            <person name="Rost B."/>
            <person name="Ruan Y."/>
            <person name="Salzberg S.L."/>
            <person name="Sandelin A."/>
            <person name="Schneider C."/>
            <person name="Schoenbach C."/>
            <person name="Sekiguchi K."/>
            <person name="Semple C.A."/>
            <person name="Seno S."/>
            <person name="Sessa L."/>
            <person name="Sheng Y."/>
            <person name="Shibata Y."/>
            <person name="Shimada H."/>
            <person name="Shimada K."/>
            <person name="Silva D."/>
            <person name="Sinclair B."/>
            <person name="Sperling S."/>
            <person name="Stupka E."/>
            <person name="Sugiura K."/>
            <person name="Sultana R."/>
            <person name="Takenaka Y."/>
            <person name="Taki K."/>
            <person name="Tammoja K."/>
            <person name="Tan S.L."/>
            <person name="Tang S."/>
            <person name="Taylor M.S."/>
            <person name="Tegner J."/>
            <person name="Teichmann S.A."/>
            <person name="Ueda H.R."/>
            <person name="van Nimwegen E."/>
            <person name="Verardo R."/>
            <person name="Wei C.L."/>
            <person name="Yagi K."/>
            <person name="Yamanishi H."/>
            <person name="Zabarovsky E."/>
            <person name="Zhu S."/>
            <person name="Zimmer A."/>
            <person name="Hide W."/>
            <person name="Bult C."/>
            <person name="Grimmond S.M."/>
            <person name="Teasdale R.D."/>
            <person name="Liu E.T."/>
            <person name="Brusic V."/>
            <person name="Quackenbush J."/>
            <person name="Wahlestedt C."/>
            <person name="Mattick J.S."/>
            <person name="Hume D.A."/>
            <person name="Kai C."/>
            <person name="Sasaki D."/>
            <person name="Tomaru Y."/>
            <person name="Fukuda S."/>
            <person name="Kanamori-Katayama M."/>
            <person name="Suzuki M."/>
            <person name="Aoki J."/>
            <person name="Arakawa T."/>
            <person name="Iida J."/>
            <person name="Imamura K."/>
            <person name="Itoh M."/>
            <person name="Kato T."/>
            <person name="Kawaji H."/>
            <person name="Kawagashira N."/>
            <person name="Kawashima T."/>
            <person name="Kojima M."/>
            <person name="Kondo S."/>
            <person name="Konno H."/>
            <person name="Nakano K."/>
            <person name="Ninomiya N."/>
            <person name="Nishio T."/>
            <person name="Okada M."/>
            <person name="Plessy C."/>
            <person name="Shibata K."/>
            <person name="Shiraki T."/>
            <person name="Suzuki S."/>
            <person name="Tagami M."/>
            <person name="Waki K."/>
            <person name="Watahiki A."/>
            <person name="Okamura-Oho Y."/>
            <person name="Suzuki H."/>
            <person name="Kawai J."/>
            <person name="Hayashizaki Y."/>
        </authorList>
    </citation>
    <scope>NUCLEOTIDE SEQUENCE [LARGE SCALE MRNA]</scope>
    <source>
        <strain>C57BL/6J</strain>
        <strain>NOD</strain>
        <tissue>Embryo</tissue>
        <tissue>Thymus</tissue>
    </source>
</reference>
<reference key="2">
    <citation type="journal article" date="2004" name="Genome Res.">
        <title>The status, quality, and expansion of the NIH full-length cDNA project: the Mammalian Gene Collection (MGC).</title>
        <authorList>
            <consortium name="The MGC Project Team"/>
        </authorList>
    </citation>
    <scope>NUCLEOTIDE SEQUENCE [LARGE SCALE MRNA]</scope>
    <source>
        <strain>FVB/N</strain>
    </source>
</reference>
<feature type="chain" id="PRO_0000059330" description="Transcription factor 19-like protein">
    <location>
        <begin position="1"/>
        <end position="263"/>
    </location>
</feature>
<feature type="domain" description="FHA" evidence="2">
    <location>
        <begin position="31"/>
        <end position="88"/>
    </location>
</feature>
<feature type="region of interest" description="Disordered" evidence="3">
    <location>
        <begin position="140"/>
        <end position="164"/>
    </location>
</feature>
<feature type="region of interest" description="Disordered" evidence="3">
    <location>
        <begin position="189"/>
        <end position="225"/>
    </location>
</feature>
<feature type="modified residue" description="Phosphoserine" evidence="1">
    <location>
        <position position="78"/>
    </location>
</feature>
<feature type="sequence conflict" description="In Ref. 1; BAC36789." evidence="4" ref="1">
    <original>G</original>
    <variation>R</variation>
    <location>
        <position position="32"/>
    </location>
</feature>
<feature type="sequence conflict" description="In Ref. 1; BAB23229." evidence="4" ref="1">
    <original>Q</original>
    <variation>E</variation>
    <location>
        <position position="130"/>
    </location>
</feature>
<feature type="sequence conflict" description="In Ref. 1; BAC36789." evidence="4" ref="1">
    <original>R</original>
    <variation>W</variation>
    <location>
        <position position="252"/>
    </location>
</feature>
<proteinExistence type="evidence at transcript level"/>
<gene>
    <name type="primary">Tcf19</name>
    <name type="synonym">Sc1</name>
</gene>
<sequence length="263" mass="28068">MLPCFQLLRIGGGRGGDLYTFHPPSKSGCTYGLGCRADLCDVALRPQQEPGLISGVHAELHAELQGDDWRVSLEDHSSQGTLVNNVRLPRGHRLELSDGDLLTFGPQGQAGTSSSSEFYFMFQQVRVKPQDFAAITVPRSKGEAGGGFQPMLPPQGAPQRPLSTLSSAPKATLILNSIGSLSKLQAQPLTFSRGGGRPQGLAIPSQHGEAQVSPAPPTRNRRKSAHKVLAELDDEVSPGPLSVLTEPRKRLRVEKAALIASGE</sequence>
<keyword id="KW-0539">Nucleus</keyword>
<keyword id="KW-0597">Phosphoprotein</keyword>
<keyword id="KW-1185">Reference proteome</keyword>